<reference key="1">
    <citation type="journal article" date="1997" name="Biosci. Biotechnol. Biochem.">
        <title>DNA sequence of Bacillus subtilis (natto) NR-1 gamma-glutamyltranspeptidase gene, ggt.</title>
        <authorList>
            <person name="Ogawa Y."/>
            <person name="Sugiura D."/>
            <person name="Motai H."/>
            <person name="Yuasa K."/>
            <person name="Tahara Y."/>
        </authorList>
    </citation>
    <scope>NUCLEOTIDE SEQUENCE [GENOMIC DNA]</scope>
    <scope>POSSIBLE INDUCTION</scope>
    <source>
        <strain>NR-1</strain>
    </source>
</reference>
<reference key="2">
    <citation type="journal article" date="1991" name="Agric. Biol. Chem.">
        <title>Purification and properties of gamma-glutamyltranspeptidase from Bacillus subtilis (natto).</title>
        <authorList>
            <person name="Ogawa Y."/>
            <person name="Hosoyama H."/>
            <person name="Hamano M."/>
            <person name="Motai H."/>
        </authorList>
    </citation>
    <scope>PROTEIN SEQUENCE OF 36-52 AND 403-442</scope>
    <scope>FUNCTION</scope>
    <scope>CATALYTIC ACTIVITY</scope>
    <scope>BIOPHYSICOCHEMICAL PROPERTIES</scope>
    <scope>SUBUNIT</scope>
    <scope>SUBCELLULAR LOCATION</scope>
    <source>
        <strain>NR-1</strain>
    </source>
</reference>
<gene>
    <name type="primary">ggt</name>
</gene>
<protein>
    <recommendedName>
        <fullName>Glutathione hydrolase proenzyme</fullName>
        <ecNumber>3.4.19.13</ecNumber>
    </recommendedName>
    <alternativeName>
        <fullName evidence="5">Gamma-glutamyltranspeptidase proenzyme</fullName>
        <shortName evidence="5">Gamma-GTP</shortName>
        <ecNumber evidence="4">2.3.2.2</ecNumber>
    </alternativeName>
    <component>
        <recommendedName>
            <fullName>Glutathione hydrolase large chain</fullName>
        </recommendedName>
    </component>
    <component>
        <recommendedName>
            <fullName>Glutathione hydrolase small chain</fullName>
        </recommendedName>
    </component>
</protein>
<feature type="signal peptide" evidence="3">
    <location>
        <begin position="1"/>
        <end position="28"/>
    </location>
</feature>
<feature type="propeptide" id="PRO_0000011046" evidence="3">
    <location>
        <begin position="29"/>
        <end position="35"/>
    </location>
</feature>
<feature type="chain" id="PRO_0000011047" description="Glutathione hydrolase large chain">
    <location>
        <begin position="36"/>
        <end position="402"/>
    </location>
</feature>
<feature type="chain" id="PRO_0000011048" description="Glutathione hydrolase small chain">
    <location>
        <begin position="403"/>
        <end position="587"/>
    </location>
</feature>
<feature type="active site" description="Nucleophile" evidence="2">
    <location>
        <position position="403"/>
    </location>
</feature>
<feature type="binding site" evidence="2">
    <location>
        <position position="113"/>
    </location>
    <ligand>
        <name>L-glutamate</name>
        <dbReference type="ChEBI" id="CHEBI:29985"/>
    </ligand>
</feature>
<feature type="binding site" evidence="1">
    <location>
        <position position="421"/>
    </location>
    <ligand>
        <name>L-glutamate</name>
        <dbReference type="ChEBI" id="CHEBI:29985"/>
    </ligand>
</feature>
<feature type="binding site" evidence="2">
    <location>
        <position position="423"/>
    </location>
    <ligand>
        <name>L-glutamate</name>
        <dbReference type="ChEBI" id="CHEBI:29985"/>
    </ligand>
</feature>
<feature type="binding site" evidence="2">
    <location>
        <position position="442"/>
    </location>
    <ligand>
        <name>L-glutamate</name>
        <dbReference type="ChEBI" id="CHEBI:29985"/>
    </ligand>
</feature>
<feature type="binding site" evidence="2">
    <location>
        <position position="445"/>
    </location>
    <ligand>
        <name>L-glutamate</name>
        <dbReference type="ChEBI" id="CHEBI:29985"/>
    </ligand>
</feature>
<feature type="binding site" evidence="2">
    <location>
        <begin position="464"/>
        <end position="465"/>
    </location>
    <ligand>
        <name>L-glutamate</name>
        <dbReference type="ChEBI" id="CHEBI:29985"/>
    </ligand>
</feature>
<feature type="binding site" evidence="2">
    <location>
        <begin position="485"/>
        <end position="486"/>
    </location>
    <ligand>
        <name>L-glutamate</name>
        <dbReference type="ChEBI" id="CHEBI:29985"/>
    </ligand>
</feature>
<feature type="sequence conflict" description="In Ref. 2; AA sequence." evidence="6" ref="2">
    <original>D</original>
    <variation>V</variation>
    <location>
        <position position="46"/>
    </location>
</feature>
<organism>
    <name type="scientific">Bacillus subtilis subsp. natto</name>
    <dbReference type="NCBI Taxonomy" id="86029"/>
    <lineage>
        <taxon>Bacteria</taxon>
        <taxon>Bacillati</taxon>
        <taxon>Bacillota</taxon>
        <taxon>Bacilli</taxon>
        <taxon>Bacillales</taxon>
        <taxon>Bacillaceae</taxon>
        <taxon>Bacillus</taxon>
    </lineage>
</organism>
<accession>P63186</accession>
<keyword id="KW-0012">Acyltransferase</keyword>
<keyword id="KW-0903">Direct protein sequencing</keyword>
<keyword id="KW-0317">Glutathione biosynthesis</keyword>
<keyword id="KW-0378">Hydrolase</keyword>
<keyword id="KW-0645">Protease</keyword>
<keyword id="KW-0964">Secreted</keyword>
<keyword id="KW-0732">Signal</keyword>
<keyword id="KW-0808">Transferase</keyword>
<keyword id="KW-0865">Zymogen</keyword>
<evidence type="ECO:0000250" key="1"/>
<evidence type="ECO:0000250" key="2">
    <source>
        <dbReference type="UniProtKB" id="P54422"/>
    </source>
</evidence>
<evidence type="ECO:0000255" key="3"/>
<evidence type="ECO:0000269" key="4">
    <source>
    </source>
</evidence>
<evidence type="ECO:0000303" key="5">
    <source>
    </source>
</evidence>
<evidence type="ECO:0000305" key="6"/>
<evidence type="ECO:0000305" key="7">
    <source>
    </source>
</evidence>
<comment type="function">
    <text evidence="4">Cleaves the gamma-glutamyl bond of extracellular glutathione (gamma-Glu-Cys-Gly), glutathione conjugates, and other gamma-glutamyl compounds. The metabolism of glutathione releases free glutamate and the dipeptide cysteinyl-glycine, which is hydrolyzed to cysteine and glycine by dipeptidases. Uses glutamine as a gamma-glutamyl donor and acceptor for gamma-polyglutamic acid synthesis. Dipeptides are better gamma-glutamyl acceptors than free amino acids (PubMed:1371053).</text>
</comment>
<comment type="catalytic activity">
    <reaction evidence="4">
        <text>an N-terminal (5-L-glutamyl)-[peptide] + an alpha-amino acid = 5-L-glutamyl amino acid + an N-terminal L-alpha-aminoacyl-[peptide]</text>
        <dbReference type="Rhea" id="RHEA:23904"/>
        <dbReference type="Rhea" id="RHEA-COMP:9780"/>
        <dbReference type="Rhea" id="RHEA-COMP:9795"/>
        <dbReference type="ChEBI" id="CHEBI:77644"/>
        <dbReference type="ChEBI" id="CHEBI:78597"/>
        <dbReference type="ChEBI" id="CHEBI:78599"/>
        <dbReference type="ChEBI" id="CHEBI:78608"/>
        <dbReference type="EC" id="2.3.2.2"/>
    </reaction>
</comment>
<comment type="catalytic activity">
    <reaction>
        <text>glutathione + H2O = L-cysteinylglycine + L-glutamate</text>
        <dbReference type="Rhea" id="RHEA:28807"/>
        <dbReference type="ChEBI" id="CHEBI:15377"/>
        <dbReference type="ChEBI" id="CHEBI:29985"/>
        <dbReference type="ChEBI" id="CHEBI:57925"/>
        <dbReference type="ChEBI" id="CHEBI:61694"/>
        <dbReference type="EC" id="3.4.19.13"/>
    </reaction>
</comment>
<comment type="catalytic activity">
    <reaction>
        <text>an S-substituted glutathione + H2O = an S-substituted L-cysteinylglycine + L-glutamate</text>
        <dbReference type="Rhea" id="RHEA:59468"/>
        <dbReference type="ChEBI" id="CHEBI:15377"/>
        <dbReference type="ChEBI" id="CHEBI:29985"/>
        <dbReference type="ChEBI" id="CHEBI:90779"/>
        <dbReference type="ChEBI" id="CHEBI:143103"/>
        <dbReference type="EC" id="3.4.19.13"/>
    </reaction>
</comment>
<comment type="activity regulation">
    <text evidence="7">Inhibited by glucose.</text>
</comment>
<comment type="biophysicochemical properties">
    <phDependence>
        <text evidence="4">Optimum pH is 8.0-8.5 for transfer of p-nitroanilide from gamma-glutamyl-p-nitroanilide (gamma-GpNA) to glycylglycine (gly-gly).</text>
    </phDependence>
    <temperatureDependence>
        <text evidence="4">Optimum temperature is 60 degrees Celsius.</text>
    </temperatureDependence>
</comment>
<comment type="pathway">
    <text>Sulfur metabolism; glutathione metabolism.</text>
</comment>
<comment type="subunit">
    <text evidence="4">This enzyme consists of two polypeptide chains, which are synthesized in precursor form from a single polypeptide.</text>
</comment>
<comment type="subcellular location">
    <subcellularLocation>
        <location evidence="4">Secreted</location>
    </subcellularLocation>
</comment>
<comment type="PTM">
    <text evidence="4">Cleaved by autocatalysis into a large and small subunit.</text>
</comment>
<comment type="similarity">
    <text evidence="6">Belongs to the gamma-glutamyltransferase family.</text>
</comment>
<proteinExistence type="evidence at protein level"/>
<dbReference type="EC" id="3.4.19.13"/>
<dbReference type="EC" id="2.3.2.2" evidence="4"/>
<dbReference type="PIR" id="F69631">
    <property type="entry name" value="F69631"/>
</dbReference>
<dbReference type="SMR" id="P63186"/>
<dbReference type="UniPathway" id="UPA00204"/>
<dbReference type="GO" id="GO:0005576">
    <property type="term" value="C:extracellular region"/>
    <property type="evidence" value="ECO:0007669"/>
    <property type="project" value="UniProtKB-SubCell"/>
</dbReference>
<dbReference type="GO" id="GO:0036374">
    <property type="term" value="F:glutathione hydrolase activity"/>
    <property type="evidence" value="ECO:0007669"/>
    <property type="project" value="UniProtKB-EC"/>
</dbReference>
<dbReference type="GO" id="GO:0103068">
    <property type="term" value="F:leukotriene C4 gamma-glutamyl transferase activity"/>
    <property type="evidence" value="ECO:0007669"/>
    <property type="project" value="UniProtKB-EC"/>
</dbReference>
<dbReference type="GO" id="GO:0006750">
    <property type="term" value="P:glutathione biosynthetic process"/>
    <property type="evidence" value="ECO:0007669"/>
    <property type="project" value="UniProtKB-KW"/>
</dbReference>
<dbReference type="GO" id="GO:0006751">
    <property type="term" value="P:glutathione catabolic process"/>
    <property type="evidence" value="ECO:0007669"/>
    <property type="project" value="InterPro"/>
</dbReference>
<dbReference type="GO" id="GO:0006508">
    <property type="term" value="P:proteolysis"/>
    <property type="evidence" value="ECO:0007669"/>
    <property type="project" value="UniProtKB-KW"/>
</dbReference>
<dbReference type="Gene3D" id="1.10.246.130">
    <property type="match status" value="1"/>
</dbReference>
<dbReference type="Gene3D" id="3.60.20.40">
    <property type="match status" value="1"/>
</dbReference>
<dbReference type="InterPro" id="IPR051792">
    <property type="entry name" value="GGT_bact"/>
</dbReference>
<dbReference type="InterPro" id="IPR055262">
    <property type="entry name" value="GGT_CS"/>
</dbReference>
<dbReference type="InterPro" id="IPR043138">
    <property type="entry name" value="GGT_lsub_C"/>
</dbReference>
<dbReference type="InterPro" id="IPR000101">
    <property type="entry name" value="GGT_peptidase"/>
</dbReference>
<dbReference type="InterPro" id="IPR043137">
    <property type="entry name" value="GGT_ssub"/>
</dbReference>
<dbReference type="InterPro" id="IPR029055">
    <property type="entry name" value="Ntn_hydrolases_N"/>
</dbReference>
<dbReference type="NCBIfam" id="TIGR00066">
    <property type="entry name" value="g_glut_trans"/>
    <property type="match status" value="1"/>
</dbReference>
<dbReference type="PANTHER" id="PTHR43199">
    <property type="entry name" value="GLUTATHIONE HYDROLASE"/>
    <property type="match status" value="1"/>
</dbReference>
<dbReference type="PANTHER" id="PTHR43199:SF1">
    <property type="entry name" value="GLUTATHIONE HYDROLASE PROENZYME"/>
    <property type="match status" value="1"/>
</dbReference>
<dbReference type="Pfam" id="PF01019">
    <property type="entry name" value="G_glu_transpept"/>
    <property type="match status" value="1"/>
</dbReference>
<dbReference type="PRINTS" id="PR01210">
    <property type="entry name" value="GGTRANSPTASE"/>
</dbReference>
<dbReference type="SUPFAM" id="SSF56235">
    <property type="entry name" value="N-terminal nucleophile aminohydrolases (Ntn hydrolases)"/>
    <property type="match status" value="1"/>
</dbReference>
<dbReference type="PROSITE" id="PS00462">
    <property type="entry name" value="G_GLU_TRANSPEPTIDASE"/>
    <property type="match status" value="1"/>
</dbReference>
<sequence>MKRTWNVCLTALLSVLLVAGSVPFHAEAKKPPKSYDEYKQVDVGKDGMVATAHALASEIGADVLKKGGNAIDAAVAIQFALNVTEPMMSGIGGGGFMMVYDGKTKDTTIIDSRERAPAGATPDMFLDENGKAIPFSERVTKGTAVGVPGTLKGLEEALDKWGTRSMKLLITLTIKLAEKGFPIDSVLADAISDYQEKLSRTAAKDVFLPNGEPLKEGDTLIQKDLAKTFKLIRSKGTDAFYKGKFAKTLSDTVQDFGGSMTEKDLENYDITIDEPIWGDYQGYQIATTPPPSSGGIFLLQMLKILDDFNLSQYDVRSWEKYQLLAETMHLSYADRASYAGDPEFVNVPLKGLLHPDYIKERQQLINLDQVNKKPKAGDPWKYQEGSANYKQVEQPKDKVEGQTTHFTVADRWGNVVSYTTTIEQLFGTGIMVPDYGVILNNELTDFDAIPGGANEVQPNKRPLSSMTPTILFKDDKPVLTVGSPGGATIISSVLQTILYHIEYGMGLKAAVEEPRIYTTSMSSYRYEDGVPKDVLSKLNGMGHRFGTSPVDIGNVQSISIDHENGTFKGVVISGSNDAAIGINLKRK</sequence>
<name>GGT_BACNA</name>